<evidence type="ECO:0000255" key="1">
    <source>
        <dbReference type="HAMAP-Rule" id="MF_00141"/>
    </source>
</evidence>
<name>EFP_FERNB</name>
<gene>
    <name evidence="1" type="primary">efp</name>
    <name type="ordered locus">Fnod_0094</name>
</gene>
<accession>A7HJ78</accession>
<reference key="1">
    <citation type="submission" date="2007-07" db="EMBL/GenBank/DDBJ databases">
        <title>Complete sequence of Fervidobacterium nodosum Rt17-B1.</title>
        <authorList>
            <consortium name="US DOE Joint Genome Institute"/>
            <person name="Copeland A."/>
            <person name="Lucas S."/>
            <person name="Lapidus A."/>
            <person name="Barry K."/>
            <person name="Glavina del Rio T."/>
            <person name="Dalin E."/>
            <person name="Tice H."/>
            <person name="Pitluck S."/>
            <person name="Saunders E."/>
            <person name="Brettin T."/>
            <person name="Bruce D."/>
            <person name="Detter J.C."/>
            <person name="Han C."/>
            <person name="Schmutz J."/>
            <person name="Larimer F."/>
            <person name="Land M."/>
            <person name="Hauser L."/>
            <person name="Kyrpides N."/>
            <person name="Mikhailova N."/>
            <person name="Nelson K."/>
            <person name="Gogarten J.P."/>
            <person name="Noll K."/>
            <person name="Richardson P."/>
        </authorList>
    </citation>
    <scope>NUCLEOTIDE SEQUENCE [LARGE SCALE GENOMIC DNA]</scope>
    <source>
        <strain>ATCC 35602 / DSM 5306 / Rt17-B1</strain>
    </source>
</reference>
<dbReference type="EMBL" id="CP000771">
    <property type="protein sequence ID" value="ABS59961.1"/>
    <property type="molecule type" value="Genomic_DNA"/>
</dbReference>
<dbReference type="RefSeq" id="WP_011993284.1">
    <property type="nucleotide sequence ID" value="NC_009718.1"/>
</dbReference>
<dbReference type="SMR" id="A7HJ78"/>
<dbReference type="STRING" id="381764.Fnod_0094"/>
<dbReference type="KEGG" id="fno:Fnod_0094"/>
<dbReference type="eggNOG" id="COG0231">
    <property type="taxonomic scope" value="Bacteria"/>
</dbReference>
<dbReference type="HOGENOM" id="CLU_074944_0_1_0"/>
<dbReference type="OrthoDB" id="9801844at2"/>
<dbReference type="UniPathway" id="UPA00345"/>
<dbReference type="Proteomes" id="UP000002415">
    <property type="component" value="Chromosome"/>
</dbReference>
<dbReference type="GO" id="GO:0005737">
    <property type="term" value="C:cytoplasm"/>
    <property type="evidence" value="ECO:0007669"/>
    <property type="project" value="UniProtKB-SubCell"/>
</dbReference>
<dbReference type="GO" id="GO:0003746">
    <property type="term" value="F:translation elongation factor activity"/>
    <property type="evidence" value="ECO:0007669"/>
    <property type="project" value="UniProtKB-UniRule"/>
</dbReference>
<dbReference type="GO" id="GO:0043043">
    <property type="term" value="P:peptide biosynthetic process"/>
    <property type="evidence" value="ECO:0007669"/>
    <property type="project" value="InterPro"/>
</dbReference>
<dbReference type="CDD" id="cd04470">
    <property type="entry name" value="S1_EF-P_repeat_1"/>
    <property type="match status" value="1"/>
</dbReference>
<dbReference type="CDD" id="cd05794">
    <property type="entry name" value="S1_EF-P_repeat_2"/>
    <property type="match status" value="1"/>
</dbReference>
<dbReference type="FunFam" id="2.40.50.140:FF:000004">
    <property type="entry name" value="Elongation factor P"/>
    <property type="match status" value="1"/>
</dbReference>
<dbReference type="FunFam" id="2.40.50.140:FF:000009">
    <property type="entry name" value="Elongation factor P"/>
    <property type="match status" value="1"/>
</dbReference>
<dbReference type="Gene3D" id="2.30.30.30">
    <property type="match status" value="1"/>
</dbReference>
<dbReference type="Gene3D" id="2.40.50.140">
    <property type="entry name" value="Nucleic acid-binding proteins"/>
    <property type="match status" value="2"/>
</dbReference>
<dbReference type="HAMAP" id="MF_00141">
    <property type="entry name" value="EF_P"/>
    <property type="match status" value="1"/>
</dbReference>
<dbReference type="InterPro" id="IPR015365">
    <property type="entry name" value="Elong-fact-P_C"/>
</dbReference>
<dbReference type="InterPro" id="IPR012340">
    <property type="entry name" value="NA-bd_OB-fold"/>
</dbReference>
<dbReference type="InterPro" id="IPR014722">
    <property type="entry name" value="Rib_uL2_dom2"/>
</dbReference>
<dbReference type="InterPro" id="IPR020599">
    <property type="entry name" value="Transl_elong_fac_P/YeiP"/>
</dbReference>
<dbReference type="InterPro" id="IPR013185">
    <property type="entry name" value="Transl_elong_KOW-like"/>
</dbReference>
<dbReference type="InterPro" id="IPR001059">
    <property type="entry name" value="Transl_elong_P/YeiP_cen"/>
</dbReference>
<dbReference type="InterPro" id="IPR013852">
    <property type="entry name" value="Transl_elong_P/YeiP_CS"/>
</dbReference>
<dbReference type="InterPro" id="IPR011768">
    <property type="entry name" value="Transl_elongation_fac_P"/>
</dbReference>
<dbReference type="InterPro" id="IPR008991">
    <property type="entry name" value="Translation_prot_SH3-like_sf"/>
</dbReference>
<dbReference type="NCBIfam" id="TIGR00038">
    <property type="entry name" value="efp"/>
    <property type="match status" value="1"/>
</dbReference>
<dbReference type="NCBIfam" id="NF001810">
    <property type="entry name" value="PRK00529.1"/>
    <property type="match status" value="1"/>
</dbReference>
<dbReference type="PANTHER" id="PTHR30053">
    <property type="entry name" value="ELONGATION FACTOR P"/>
    <property type="match status" value="1"/>
</dbReference>
<dbReference type="PANTHER" id="PTHR30053:SF12">
    <property type="entry name" value="ELONGATION FACTOR P (EF-P) FAMILY PROTEIN"/>
    <property type="match status" value="1"/>
</dbReference>
<dbReference type="Pfam" id="PF01132">
    <property type="entry name" value="EFP"/>
    <property type="match status" value="1"/>
</dbReference>
<dbReference type="Pfam" id="PF08207">
    <property type="entry name" value="EFP_N"/>
    <property type="match status" value="1"/>
</dbReference>
<dbReference type="Pfam" id="PF09285">
    <property type="entry name" value="Elong-fact-P_C"/>
    <property type="match status" value="1"/>
</dbReference>
<dbReference type="PIRSF" id="PIRSF005901">
    <property type="entry name" value="EF-P"/>
    <property type="match status" value="1"/>
</dbReference>
<dbReference type="SMART" id="SM01185">
    <property type="entry name" value="EFP"/>
    <property type="match status" value="1"/>
</dbReference>
<dbReference type="SMART" id="SM00841">
    <property type="entry name" value="Elong-fact-P_C"/>
    <property type="match status" value="1"/>
</dbReference>
<dbReference type="SUPFAM" id="SSF50249">
    <property type="entry name" value="Nucleic acid-binding proteins"/>
    <property type="match status" value="2"/>
</dbReference>
<dbReference type="SUPFAM" id="SSF50104">
    <property type="entry name" value="Translation proteins SH3-like domain"/>
    <property type="match status" value="1"/>
</dbReference>
<dbReference type="PROSITE" id="PS01275">
    <property type="entry name" value="EFP"/>
    <property type="match status" value="1"/>
</dbReference>
<feature type="chain" id="PRO_1000071457" description="Elongation factor P">
    <location>
        <begin position="1"/>
        <end position="185"/>
    </location>
</feature>
<proteinExistence type="inferred from homology"/>
<organism>
    <name type="scientific">Fervidobacterium nodosum (strain ATCC 35602 / DSM 5306 / Rt17-B1)</name>
    <dbReference type="NCBI Taxonomy" id="381764"/>
    <lineage>
        <taxon>Bacteria</taxon>
        <taxon>Thermotogati</taxon>
        <taxon>Thermotogota</taxon>
        <taxon>Thermotogae</taxon>
        <taxon>Thermotogales</taxon>
        <taxon>Fervidobacteriaceae</taxon>
        <taxon>Fervidobacterium</taxon>
    </lineage>
</organism>
<keyword id="KW-0963">Cytoplasm</keyword>
<keyword id="KW-0251">Elongation factor</keyword>
<keyword id="KW-0648">Protein biosynthesis</keyword>
<keyword id="KW-1185">Reference proteome</keyword>
<protein>
    <recommendedName>
        <fullName evidence="1">Elongation factor P</fullName>
        <shortName evidence="1">EF-P</shortName>
    </recommendedName>
</protein>
<comment type="function">
    <text evidence="1">Involved in peptide bond synthesis. Stimulates efficient translation and peptide-bond synthesis on native or reconstituted 70S ribosomes in vitro. Probably functions indirectly by altering the affinity of the ribosome for aminoacyl-tRNA, thus increasing their reactivity as acceptors for peptidyl transferase.</text>
</comment>
<comment type="pathway">
    <text evidence="1">Protein biosynthesis; polypeptide chain elongation.</text>
</comment>
<comment type="subcellular location">
    <subcellularLocation>
        <location evidence="1">Cytoplasm</location>
    </subcellularLocation>
</comment>
<comment type="similarity">
    <text evidence="1">Belongs to the elongation factor P family.</text>
</comment>
<sequence length="185" mass="20937">MIEVGDLEKGMYIKYEGDIYRVVDVNKHFRARGSGLIRTKLKSLSTGLIRDANFASGEKVEEAELSFRKAEYLYNDGENYYFMDLQTYEQYAIPESEVDEAKYYLIENTQVDLVMHDEKPIGINLPTTVVLEVIETEPNFKGDTVSGGGKPAVLQTGLKISVPFFINVGDKIKVDTRTGEYIERA</sequence>